<keyword id="KW-0119">Carbohydrate metabolism</keyword>
<keyword id="KW-0479">Metal-binding</keyword>
<keyword id="KW-0520">NAD</keyword>
<keyword id="KW-0521">NADP</keyword>
<keyword id="KW-0547">Nucleotide-binding</keyword>
<keyword id="KW-0560">Oxidoreductase</keyword>
<keyword id="KW-1185">Reference proteome</keyword>
<keyword id="KW-0862">Zinc</keyword>
<sequence>MKAVTVIPSVPESLRLRDVDKPKPNHGQVLLKPIRVGICGTDKEIIEGKYGKAPPGSQYLILGHEALAVVEELGDGVDNVAVGDVVVPTVRRPLDCNLPVDYCPMGHYVEHGIWGLHGHAAEYSVTDAKYLVKVPKELIDVAVLTEPLSVVEKGIDVALSVGGSRFEWRPRSALILGAGPIGLLSTMVLRLMGLLTTTVATRPPDSLKARLVRELGGVYVDSALSSIEGVFDLVVEATGSPQVMVDGLRHLAPNGVMVLLGVYPPGGVINDLGNVLTDSVLNNKVLVGSVNAGVKHFELGLRHMAEAKGRFGDWLSRLITKRATLDNYQEAYSWTHDDIKTVLEINPLN</sequence>
<name>GLCD1_CALMQ</name>
<evidence type="ECO:0000255" key="1">
    <source>
        <dbReference type="HAMAP-Rule" id="MF_02127"/>
    </source>
</evidence>
<evidence type="ECO:0000305" key="2"/>
<comment type="function">
    <text evidence="1">Catalyzes the NAD(P)(+)-dependent oxidation of D-glucose to D-gluconate via gluconolactone. Can utilize both NAD(+) and NADP(+) as electron acceptor. Is involved in the degradation of glucose through a non-phosphorylative variant of the Entner-Doudoroff pathway.</text>
</comment>
<comment type="catalytic activity">
    <reaction evidence="1">
        <text>D-glucose + NAD(+) = D-glucono-1,5-lactone + NADH + H(+)</text>
        <dbReference type="Rhea" id="RHEA:14293"/>
        <dbReference type="ChEBI" id="CHEBI:4167"/>
        <dbReference type="ChEBI" id="CHEBI:15378"/>
        <dbReference type="ChEBI" id="CHEBI:16217"/>
        <dbReference type="ChEBI" id="CHEBI:57540"/>
        <dbReference type="ChEBI" id="CHEBI:57945"/>
        <dbReference type="EC" id="1.1.1.47"/>
    </reaction>
</comment>
<comment type="catalytic activity">
    <reaction evidence="1">
        <text>D-glucose + NADP(+) = D-glucono-1,5-lactone + NADPH + H(+)</text>
        <dbReference type="Rhea" id="RHEA:14405"/>
        <dbReference type="ChEBI" id="CHEBI:4167"/>
        <dbReference type="ChEBI" id="CHEBI:15378"/>
        <dbReference type="ChEBI" id="CHEBI:16217"/>
        <dbReference type="ChEBI" id="CHEBI:57783"/>
        <dbReference type="ChEBI" id="CHEBI:58349"/>
        <dbReference type="EC" id="1.1.1.47"/>
    </reaction>
</comment>
<comment type="cofactor">
    <cofactor evidence="1">
        <name>Zn(2+)</name>
        <dbReference type="ChEBI" id="CHEBI:29105"/>
    </cofactor>
</comment>
<comment type="similarity">
    <text evidence="1">Belongs to the zinc-containing alcohol dehydrogenase family. Glucose 1-dehydrogenase subfamily.</text>
</comment>
<comment type="sequence caution" evidence="2">
    <conflict type="erroneous initiation">
        <sequence resource="EMBL-CDS" id="ABW02131"/>
    </conflict>
    <text>Extended N-terminus.</text>
</comment>
<accession>A8M8R2</accession>
<feature type="chain" id="PRO_0000414828" description="Glucose 1-dehydrogenase 1">
    <location>
        <begin position="1"/>
        <end position="349"/>
    </location>
</feature>
<feature type="binding site" evidence="1">
    <location>
        <position position="39"/>
    </location>
    <ligand>
        <name>Zn(2+)</name>
        <dbReference type="ChEBI" id="CHEBI:29105"/>
        <note>catalytic</note>
    </ligand>
</feature>
<feature type="binding site" evidence="1">
    <location>
        <position position="41"/>
    </location>
    <ligand>
        <name>substrate</name>
    </ligand>
</feature>
<feature type="binding site" evidence="1">
    <location>
        <position position="64"/>
    </location>
    <ligand>
        <name>Zn(2+)</name>
        <dbReference type="ChEBI" id="CHEBI:29105"/>
        <note>catalytic</note>
    </ligand>
</feature>
<feature type="binding site" evidence="1">
    <location>
        <position position="65"/>
    </location>
    <ligand>
        <name>Zn(2+)</name>
        <dbReference type="ChEBI" id="CHEBI:29105"/>
        <note>catalytic</note>
    </ligand>
</feature>
<feature type="binding site" evidence="1">
    <location>
        <position position="110"/>
    </location>
    <ligand>
        <name>substrate</name>
    </ligand>
</feature>
<feature type="binding site" evidence="1">
    <location>
        <position position="146"/>
    </location>
    <ligand>
        <name>substrate</name>
    </ligand>
</feature>
<feature type="binding site" evidence="1">
    <location>
        <position position="146"/>
    </location>
    <ligand>
        <name>Zn(2+)</name>
        <dbReference type="ChEBI" id="CHEBI:29105"/>
        <note>catalytic</note>
    </ligand>
</feature>
<feature type="binding site" evidence="1">
    <location>
        <begin position="178"/>
        <end position="181"/>
    </location>
    <ligand>
        <name>NADP(+)</name>
        <dbReference type="ChEBI" id="CHEBI:58349"/>
    </ligand>
</feature>
<feature type="binding site" evidence="1">
    <location>
        <begin position="260"/>
        <end position="262"/>
    </location>
    <ligand>
        <name>NADP(+)</name>
        <dbReference type="ChEBI" id="CHEBI:58349"/>
    </ligand>
</feature>
<feature type="binding site" evidence="1">
    <location>
        <begin position="289"/>
        <end position="291"/>
    </location>
    <ligand>
        <name>NADP(+)</name>
        <dbReference type="ChEBI" id="CHEBI:58349"/>
    </ligand>
</feature>
<feature type="binding site" evidence="1">
    <location>
        <position position="291"/>
    </location>
    <ligand>
        <name>substrate</name>
    </ligand>
</feature>
<organism>
    <name type="scientific">Caldivirga maquilingensis (strain ATCC 700844 / DSM 13496 / JCM 10307 / IC-167)</name>
    <dbReference type="NCBI Taxonomy" id="397948"/>
    <lineage>
        <taxon>Archaea</taxon>
        <taxon>Thermoproteota</taxon>
        <taxon>Thermoprotei</taxon>
        <taxon>Thermoproteales</taxon>
        <taxon>Thermoproteaceae</taxon>
        <taxon>Caldivirga</taxon>
    </lineage>
</organism>
<gene>
    <name evidence="1" type="primary">gdh1</name>
    <name type="ordered locus">Cmaq_1304</name>
</gene>
<reference key="1">
    <citation type="submission" date="2007-10" db="EMBL/GenBank/DDBJ databases">
        <title>Complete sequence of Caldivirga maquilingensis IC-167.</title>
        <authorList>
            <consortium name="US DOE Joint Genome Institute"/>
            <person name="Copeland A."/>
            <person name="Lucas S."/>
            <person name="Lapidus A."/>
            <person name="Barry K."/>
            <person name="Glavina del Rio T."/>
            <person name="Dalin E."/>
            <person name="Tice H."/>
            <person name="Pitluck S."/>
            <person name="Saunders E."/>
            <person name="Brettin T."/>
            <person name="Bruce D."/>
            <person name="Detter J.C."/>
            <person name="Han C."/>
            <person name="Schmutz J."/>
            <person name="Larimer F."/>
            <person name="Land M."/>
            <person name="Hauser L."/>
            <person name="Kyrpides N."/>
            <person name="Ivanova N."/>
            <person name="Biddle J.F."/>
            <person name="Zhang Z."/>
            <person name="Fitz-Gibbon S.T."/>
            <person name="Lowe T.M."/>
            <person name="Saltikov C."/>
            <person name="House C.H."/>
            <person name="Richardson P."/>
        </authorList>
    </citation>
    <scope>NUCLEOTIDE SEQUENCE [LARGE SCALE GENOMIC DNA]</scope>
    <source>
        <strain>ATCC 700844 / DSM 13496 / JCM 10307 / IC-167</strain>
    </source>
</reference>
<dbReference type="EC" id="1.1.1.47" evidence="1"/>
<dbReference type="EMBL" id="CP000852">
    <property type="protein sequence ID" value="ABW02131.1"/>
    <property type="status" value="ALT_INIT"/>
    <property type="molecule type" value="Genomic_DNA"/>
</dbReference>
<dbReference type="RefSeq" id="WP_048062727.1">
    <property type="nucleotide sequence ID" value="NC_009954.1"/>
</dbReference>
<dbReference type="SMR" id="A8M8R2"/>
<dbReference type="STRING" id="397948.Cmaq_1304"/>
<dbReference type="GeneID" id="5708911"/>
<dbReference type="KEGG" id="cma:Cmaq_1304"/>
<dbReference type="eggNOG" id="arCOG01459">
    <property type="taxonomic scope" value="Archaea"/>
</dbReference>
<dbReference type="HOGENOM" id="CLU_026673_1_0_2"/>
<dbReference type="OrthoDB" id="41394at2157"/>
<dbReference type="Proteomes" id="UP000001137">
    <property type="component" value="Chromosome"/>
</dbReference>
<dbReference type="GO" id="GO:0005536">
    <property type="term" value="F:D-glucose binding"/>
    <property type="evidence" value="ECO:0007669"/>
    <property type="project" value="UniProtKB-UniRule"/>
</dbReference>
<dbReference type="GO" id="GO:0047934">
    <property type="term" value="F:glucose 1-dehydrogenase (NAD+) activity"/>
    <property type="evidence" value="ECO:0007669"/>
    <property type="project" value="RHEA"/>
</dbReference>
<dbReference type="GO" id="GO:0047935">
    <property type="term" value="F:glucose 1-dehydrogenase (NADP+) activity"/>
    <property type="evidence" value="ECO:0007669"/>
    <property type="project" value="RHEA"/>
</dbReference>
<dbReference type="GO" id="GO:0070403">
    <property type="term" value="F:NAD+ binding"/>
    <property type="evidence" value="ECO:0007669"/>
    <property type="project" value="UniProtKB-UniRule"/>
</dbReference>
<dbReference type="GO" id="GO:0070401">
    <property type="term" value="F:NADP+ binding"/>
    <property type="evidence" value="ECO:0007669"/>
    <property type="project" value="UniProtKB-UniRule"/>
</dbReference>
<dbReference type="GO" id="GO:0008270">
    <property type="term" value="F:zinc ion binding"/>
    <property type="evidence" value="ECO:0007669"/>
    <property type="project" value="UniProtKB-UniRule"/>
</dbReference>
<dbReference type="GO" id="GO:0019595">
    <property type="term" value="P:non-phosphorylated glucose catabolic process"/>
    <property type="evidence" value="ECO:0007669"/>
    <property type="project" value="UniProtKB-UniRule"/>
</dbReference>
<dbReference type="CDD" id="cd08230">
    <property type="entry name" value="glucose_DH"/>
    <property type="match status" value="1"/>
</dbReference>
<dbReference type="Gene3D" id="3.90.180.10">
    <property type="entry name" value="Medium-chain alcohol dehydrogenases, catalytic domain"/>
    <property type="match status" value="1"/>
</dbReference>
<dbReference type="Gene3D" id="3.40.50.720">
    <property type="entry name" value="NAD(P)-binding Rossmann-like Domain"/>
    <property type="match status" value="1"/>
</dbReference>
<dbReference type="HAMAP" id="MF_02127">
    <property type="entry name" value="Glucose_DH"/>
    <property type="match status" value="1"/>
</dbReference>
<dbReference type="InterPro" id="IPR013154">
    <property type="entry name" value="ADH-like_N"/>
</dbReference>
<dbReference type="InterPro" id="IPR026583">
    <property type="entry name" value="Glc_1-DH_arc"/>
</dbReference>
<dbReference type="InterPro" id="IPR031640">
    <property type="entry name" value="Glu_dehyd_C"/>
</dbReference>
<dbReference type="InterPro" id="IPR011032">
    <property type="entry name" value="GroES-like_sf"/>
</dbReference>
<dbReference type="InterPro" id="IPR036291">
    <property type="entry name" value="NAD(P)-bd_dom_sf"/>
</dbReference>
<dbReference type="PANTHER" id="PTHR43189:SF2">
    <property type="entry name" value="GLUCOSE 1-DEHYDROGENASE"/>
    <property type="match status" value="1"/>
</dbReference>
<dbReference type="PANTHER" id="PTHR43189">
    <property type="entry name" value="ZINC-TYPE ALCOHOL DEHYDROGENASE-LIKE PROTEIN C1198.01-RELATED"/>
    <property type="match status" value="1"/>
</dbReference>
<dbReference type="Pfam" id="PF08240">
    <property type="entry name" value="ADH_N"/>
    <property type="match status" value="1"/>
</dbReference>
<dbReference type="Pfam" id="PF16912">
    <property type="entry name" value="Glu_dehyd_C"/>
    <property type="match status" value="1"/>
</dbReference>
<dbReference type="SUPFAM" id="SSF50129">
    <property type="entry name" value="GroES-like"/>
    <property type="match status" value="1"/>
</dbReference>
<dbReference type="SUPFAM" id="SSF51735">
    <property type="entry name" value="NAD(P)-binding Rossmann-fold domains"/>
    <property type="match status" value="1"/>
</dbReference>
<proteinExistence type="inferred from homology"/>
<protein>
    <recommendedName>
        <fullName evidence="1">Glucose 1-dehydrogenase 1</fullName>
        <shortName evidence="1">GDH 1</shortName>
        <shortName evidence="1">GlcDH 1</shortName>
        <ecNumber evidence="1">1.1.1.47</ecNumber>
    </recommendedName>
</protein>